<feature type="initiator methionine" description="Removed" evidence="2">
    <location>
        <position position="1"/>
    </location>
</feature>
<feature type="chain" id="PRO_0000123516" description="Eukaryotic translation initiation factor 3 subunit E">
    <location>
        <begin position="2"/>
        <end position="445"/>
    </location>
</feature>
<feature type="domain" description="PCI" evidence="3">
    <location>
        <begin position="221"/>
        <end position="398"/>
    </location>
</feature>
<feature type="region of interest" description="Sufficient for interaction with EPAS1" evidence="2">
    <location>
        <begin position="4"/>
        <end position="128"/>
    </location>
</feature>
<feature type="region of interest" description="Sufficient for interaction with TRIM27" evidence="2">
    <location>
        <begin position="9"/>
        <end position="195"/>
    </location>
</feature>
<feature type="region of interest" description="Sufficient for interaction with MCM7" evidence="2">
    <location>
        <begin position="351"/>
        <end position="445"/>
    </location>
</feature>
<feature type="modified residue" description="N-acetylalanine" evidence="1 2">
    <location>
        <position position="2"/>
    </location>
</feature>
<feature type="modified residue" description="Phosphoserine" evidence="1">
    <location>
        <position position="399"/>
    </location>
</feature>
<feature type="modified residue" description="Phosphothreonine" evidence="7">
    <location>
        <position position="439"/>
    </location>
</feature>
<feature type="modified residue" description="Phosphoserine" evidence="1">
    <location>
        <position position="442"/>
    </location>
</feature>
<feature type="modified residue" description="Phosphotyrosine" evidence="6">
    <location>
        <position position="445"/>
    </location>
</feature>
<proteinExistence type="evidence at protein level"/>
<organism>
    <name type="scientific">Mus musculus</name>
    <name type="common">Mouse</name>
    <dbReference type="NCBI Taxonomy" id="10090"/>
    <lineage>
        <taxon>Eukaryota</taxon>
        <taxon>Metazoa</taxon>
        <taxon>Chordata</taxon>
        <taxon>Craniata</taxon>
        <taxon>Vertebrata</taxon>
        <taxon>Euteleostomi</taxon>
        <taxon>Mammalia</taxon>
        <taxon>Eutheria</taxon>
        <taxon>Euarchontoglires</taxon>
        <taxon>Glires</taxon>
        <taxon>Rodentia</taxon>
        <taxon>Myomorpha</taxon>
        <taxon>Muroidea</taxon>
        <taxon>Muridae</taxon>
        <taxon>Murinae</taxon>
        <taxon>Mus</taxon>
        <taxon>Mus</taxon>
    </lineage>
</organism>
<comment type="function">
    <text evidence="2 4">Component of the eukaryotic translation initiation factor 3 (eIF-3) complex, which is required for several steps in the initiation of protein synthesis. The eIF-3 complex associates with the 40S ribosome and facilitates the recruitment of eIF-1, eIF-1A, eIF-2:GTP:methionyl-tRNAi and eIF-5 to form the 43S pre-initiation complex (43S PIC). The eIF-3 complex stimulates mRNA recruitment to the 43S PIC and scanning of the mRNA for AUG recognition. The eIF-3 complex is also required for disassembly and recycling of post-termination ribosomal complexes and subsequently prevents premature joining of the 40S and 60S ribosomal subunits prior to initiation. The eIF-3 complex specifically targets and initiates translation of a subset of mRNAs involved in cell proliferation, including cell cycling, differentiation and apoptosis, and uses different modes of RNA stem-loop binding to exert either translational activation or repression. Required for nonsense-mediated mRNA decay (NMD); may act in conjunction with UPF2 to divert mRNAs from translation to the NMD pathway. May interact with MCM7 and EPAS1 and regulate the proteasome-mediated degradation of these proteins.</text>
</comment>
<comment type="subunit">
    <text evidence="1 2">Component of the eukaryotic translation initiation factor 3 (eIF-3) complex, which is composed of 13 subunits: EIF3A, EIF3B, EIF3C, EIF3D, EIF3E, EIF3F, EIF3G, EIF3H, EIF3I, EIF3J, EIF3K, EIF3L and EIF3M. The eIF-3 complex appears to include 3 stable modules: module A is composed of EIF3A, EIF3B, EIF3G and EIF3I; module B is composed of EIF3F, EIF3H, and EIF3M; and module C is composed of EIF3C, EIF3D, EIF3E, EIF3K and EIF3L. EIF3C of module C binds EIF3B of module A and EIF3H of module B, thereby linking the three modules. EIF3J is a labile subunit that binds to the eIF-3 complex via EIF3B. The eIF-3 complex interacts with RPS6KB1 under conditions of nutrient depletion. Mitogenic stimulation leads to binding and activation of a complex composed of MTOR and RPTOR, leading to phosphorylation and release of RPS6KB1 and binding of EIF4B to eIF-3. Interacts with COPS3, COPS6, COPS7 (COPS7A or COPS7B), EIF4G1, EPAS1, MCM7, NCBP1, PSMC6, TRIM27 and UPF2 (By similarity). Interacts with IFIT1 and IFIT2 (By similarity). Interacts with BZW2/5MP1 (By similarity).</text>
</comment>
<comment type="subcellular location">
    <subcellularLocation>
        <location evidence="2">Cytoplasm</location>
    </subcellularLocation>
    <subcellularLocation>
        <location evidence="2">Nucleus</location>
        <location evidence="2">PML body</location>
    </subcellularLocation>
</comment>
<comment type="tissue specificity">
    <text>Ubiquitously expressed.</text>
</comment>
<comment type="disease">
    <text evidence="5">EIF3E serves as a site for viral integration of mouse mammary tumor virus (MMTV) in mammary tumors. MMTV integration into EIF3E can result in EIF3E truncation and expression of chimeric RNA species which terminate at a cryptic transcription stop signal in the reverse U3 portion of the MMTV long terminal repeat. This causes deregulation of the normal control of mammary epithelial cell growth.</text>
</comment>
<comment type="similarity">
    <text evidence="2">Belongs to the eIF-3 subunit E family.</text>
</comment>
<keyword id="KW-0007">Acetylation</keyword>
<keyword id="KW-0963">Cytoplasm</keyword>
<keyword id="KW-0396">Initiation factor</keyword>
<keyword id="KW-0539">Nucleus</keyword>
<keyword id="KW-0597">Phosphoprotein</keyword>
<keyword id="KW-0648">Protein biosynthesis</keyword>
<keyword id="KW-1185">Reference proteome</keyword>
<accession>P60229</accession>
<accession>O43902</accession>
<accession>Q64058</accession>
<accession>Q64059</accession>
<accession>Q64252</accession>
<reference key="1">
    <citation type="journal article" date="1995" name="J. Virol.">
        <title>Int-6, a highly conserved, widely expressed gene, is mutated by mouse mammary tumor virus in mammary preneoplasia.</title>
        <authorList>
            <person name="Marchetti A."/>
            <person name="Buttitta F."/>
            <person name="Miyazaki S."/>
            <person name="Gallahan D."/>
            <person name="Smith G.H."/>
            <person name="Callahan R."/>
        </authorList>
    </citation>
    <scope>NUCLEOTIDE SEQUENCE [GENOMIC DNA]</scope>
    <scope>INVOLVEMENT IN MAMMARY TUMORS</scope>
</reference>
<reference key="2">
    <citation type="journal article" date="1997" name="DNA Cell Biol.">
        <title>Characterization of the INT6 mammary tumor gene product.</title>
        <authorList>
            <person name="Diella F."/>
            <person name="Levi G."/>
            <person name="Callahan R."/>
        </authorList>
    </citation>
    <scope>NUCLEOTIDE SEQUENCE</scope>
</reference>
<reference key="3">
    <citation type="submission" date="1997-02" db="EMBL/GenBank/DDBJ databases">
        <authorList>
            <person name="Callahan R."/>
        </authorList>
    </citation>
    <scope>SEQUENCE REVISION TO N-TERMINUS</scope>
</reference>
<reference key="4">
    <citation type="journal article" date="2004" name="Genome Res.">
        <title>The status, quality, and expansion of the NIH full-length cDNA project: the Mammalian Gene Collection (MGC).</title>
        <authorList>
            <consortium name="The MGC Project Team"/>
        </authorList>
    </citation>
    <scope>NUCLEOTIDE SEQUENCE [LARGE SCALE MRNA]</scope>
    <source>
        <strain>Czech II</strain>
        <tissue>Mammary gland</tissue>
    </source>
</reference>
<reference key="5">
    <citation type="journal article" date="2005" name="Nat. Biotechnol.">
        <title>Immunoaffinity profiling of tyrosine phosphorylation in cancer cells.</title>
        <authorList>
            <person name="Rush J."/>
            <person name="Moritz A."/>
            <person name="Lee K.A."/>
            <person name="Guo A."/>
            <person name="Goss V.L."/>
            <person name="Spek E.J."/>
            <person name="Zhang H."/>
            <person name="Zha X.-M."/>
            <person name="Polakiewicz R.D."/>
            <person name="Comb M.J."/>
        </authorList>
    </citation>
    <scope>PHOSPHORYLATION [LARGE SCALE ANALYSIS] AT TYR-445</scope>
    <scope>IDENTIFICATION BY MASS SPECTROMETRY [LARGE SCALE ANALYSIS]</scope>
</reference>
<reference key="6">
    <citation type="journal article" date="2007" name="EMBO J.">
        <title>Reconstitution reveals the functional core of mammalian eIF3.</title>
        <authorList>
            <person name="Masutani M."/>
            <person name="Sonenberg N."/>
            <person name="Yokoyama S."/>
            <person name="Imataka H."/>
        </authorList>
    </citation>
    <scope>FUNCTION</scope>
    <scope>CHARACTERIZATION OF THE EIF-3 COMPLEX</scope>
    <scope>IDENTIFICATION IN THE EIF-3 COMPLEX</scope>
    <scope>IDENTIFICATION BY MASS SPECTROMETRY</scope>
</reference>
<reference key="7">
    <citation type="journal article" date="2007" name="Science">
        <title>ATM and ATR substrate analysis reveals extensive protein networks responsive to DNA damage.</title>
        <authorList>
            <person name="Matsuoka S."/>
            <person name="Ballif B.A."/>
            <person name="Smogorzewska A."/>
            <person name="McDonald E.R. III"/>
            <person name="Hurov K.E."/>
            <person name="Luo J."/>
            <person name="Bakalarski C.E."/>
            <person name="Zhao Z."/>
            <person name="Solimini N."/>
            <person name="Lerenthal Y."/>
            <person name="Shiloh Y."/>
            <person name="Gygi S.P."/>
            <person name="Elledge S.J."/>
        </authorList>
    </citation>
    <scope>PHOSPHORYLATION [LARGE SCALE ANALYSIS] AT THR-439</scope>
    <scope>IDENTIFICATION BY MASS SPECTROMETRY [LARGE SCALE ANALYSIS]</scope>
    <source>
        <tissue>Embryonic fibroblast</tissue>
    </source>
</reference>
<reference key="8">
    <citation type="journal article" date="2010" name="Cell">
        <title>A tissue-specific atlas of mouse protein phosphorylation and expression.</title>
        <authorList>
            <person name="Huttlin E.L."/>
            <person name="Jedrychowski M.P."/>
            <person name="Elias J.E."/>
            <person name="Goswami T."/>
            <person name="Rad R."/>
            <person name="Beausoleil S.A."/>
            <person name="Villen J."/>
            <person name="Haas W."/>
            <person name="Sowa M.E."/>
            <person name="Gygi S.P."/>
        </authorList>
    </citation>
    <scope>IDENTIFICATION BY MASS SPECTROMETRY [LARGE SCALE ANALYSIS]</scope>
    <source>
        <tissue>Brain</tissue>
        <tissue>Brown adipose tissue</tissue>
        <tissue>Heart</tissue>
        <tissue>Kidney</tissue>
        <tissue>Liver</tissue>
        <tissue>Lung</tissue>
        <tissue>Pancreas</tissue>
        <tissue>Spleen</tissue>
        <tissue>Testis</tissue>
    </source>
</reference>
<evidence type="ECO:0000250" key="1">
    <source>
        <dbReference type="UniProtKB" id="P60228"/>
    </source>
</evidence>
<evidence type="ECO:0000255" key="2">
    <source>
        <dbReference type="HAMAP-Rule" id="MF_03004"/>
    </source>
</evidence>
<evidence type="ECO:0000255" key="3">
    <source>
        <dbReference type="PROSITE-ProRule" id="PRU01185"/>
    </source>
</evidence>
<evidence type="ECO:0000269" key="4">
    <source>
    </source>
</evidence>
<evidence type="ECO:0000269" key="5">
    <source>
    </source>
</evidence>
<evidence type="ECO:0007744" key="6">
    <source>
    </source>
</evidence>
<evidence type="ECO:0007744" key="7">
    <source>
    </source>
</evidence>
<sequence>MAEYDLTTRIAHFLDRHLVFPLLEFLSVKEIYNEKELLQGKLDLLSDTNMVDFAMDVYKNLYSDDIPHALREKRTTVVAQLKQLQAETEPIVKMFEDPETTRQMQSTRDGRMLFDYLADKHGFRQEYLDTLYRYAKFQYECGNYSGAAEYLYFFRVLVPATDRNALSSLWGKLASEILMQNWDAAMEDLTRLKETIDNNSVSSPLQSLQQRTWLIHWSLFVFFNHPKGRDNIIDLFLYQPQYLNAIQTMCPHILRYLTTAVITNKDVRKRRQVLKDLVKVIQQESYTYKDPITEFVECLYVNFDFDGAQKKLRECESVLVNDFFLVACLEDFIENARLFIFETFCRIHQCISINMLADKLNMTPEEAERWIVNLIRNARLDAKIDSKLGHVVMGNNAVSPYQQVIEKTKSLSFRSQMLAMNIEKKLNQNSRSEAPNWATQDSGFY</sequence>
<protein>
    <recommendedName>
        <fullName evidence="2">Eukaryotic translation initiation factor 3 subunit E</fullName>
        <shortName evidence="2">eIF3e</shortName>
    </recommendedName>
    <alternativeName>
        <fullName evidence="2">Eukaryotic translation initiation factor 3 subunit 6</fullName>
    </alternativeName>
    <alternativeName>
        <fullName>MMTV integration site 6</fullName>
    </alternativeName>
    <alternativeName>
        <fullName>Mammary tumor-associated protein INT-6</fullName>
    </alternativeName>
    <alternativeName>
        <fullName>Viral integration site protein INT-6</fullName>
    </alternativeName>
    <alternativeName>
        <fullName evidence="2">eIF-3 p48</fullName>
    </alternativeName>
</protein>
<dbReference type="EMBL" id="S75221">
    <property type="protein sequence ID" value="AAC00046.1"/>
    <property type="molecule type" value="Genomic_DNA"/>
</dbReference>
<dbReference type="EMBL" id="S75223">
    <property type="protein sequence ID" value="AAC00047.1"/>
    <property type="molecule type" value="Genomic_DNA"/>
</dbReference>
<dbReference type="EMBL" id="BC029177">
    <property type="protein sequence ID" value="AAH29177.1"/>
    <property type="molecule type" value="mRNA"/>
</dbReference>
<dbReference type="CCDS" id="CCDS27452.1"/>
<dbReference type="RefSeq" id="NP_032414.1">
    <property type="nucleotide sequence ID" value="NM_008388.2"/>
</dbReference>
<dbReference type="SMR" id="P60229"/>
<dbReference type="BioGRID" id="200775">
    <property type="interactions" value="137"/>
</dbReference>
<dbReference type="DIP" id="DIP-44570N"/>
<dbReference type="FunCoup" id="P60229">
    <property type="interactions" value="4023"/>
</dbReference>
<dbReference type="IntAct" id="P60229">
    <property type="interactions" value="114"/>
</dbReference>
<dbReference type="MINT" id="P60229"/>
<dbReference type="STRING" id="10090.ENSMUSP00000022960"/>
<dbReference type="GlyGen" id="P60229">
    <property type="glycosylation" value="1 site, 1 O-linked glycan (1 site)"/>
</dbReference>
<dbReference type="iPTMnet" id="P60229"/>
<dbReference type="MetOSite" id="P60229"/>
<dbReference type="PhosphoSitePlus" id="P60229"/>
<dbReference type="SwissPalm" id="P60229"/>
<dbReference type="CPTAC" id="non-CPTAC-3790"/>
<dbReference type="jPOST" id="P60229"/>
<dbReference type="PaxDb" id="10090-ENSMUSP00000022960"/>
<dbReference type="PeptideAtlas" id="P60229"/>
<dbReference type="ProteomicsDB" id="275521"/>
<dbReference type="Pumba" id="P60229"/>
<dbReference type="Antibodypedia" id="13407">
    <property type="antibodies" value="305 antibodies from 33 providers"/>
</dbReference>
<dbReference type="DNASU" id="16341"/>
<dbReference type="Ensembl" id="ENSMUST00000022960.4">
    <property type="protein sequence ID" value="ENSMUSP00000022960.3"/>
    <property type="gene ID" value="ENSMUSG00000022336.4"/>
</dbReference>
<dbReference type="GeneID" id="16341"/>
<dbReference type="KEGG" id="mmu:16341"/>
<dbReference type="UCSC" id="uc007vpj.1">
    <property type="organism name" value="mouse"/>
</dbReference>
<dbReference type="AGR" id="MGI:99257"/>
<dbReference type="CTD" id="3646"/>
<dbReference type="MGI" id="MGI:99257">
    <property type="gene designation" value="Eif3e"/>
</dbReference>
<dbReference type="VEuPathDB" id="HostDB:ENSMUSG00000022336"/>
<dbReference type="eggNOG" id="KOG2758">
    <property type="taxonomic scope" value="Eukaryota"/>
</dbReference>
<dbReference type="GeneTree" id="ENSGT00390000002661"/>
<dbReference type="HOGENOM" id="CLU_031132_0_1_1"/>
<dbReference type="InParanoid" id="P60229"/>
<dbReference type="OMA" id="NCPWILR"/>
<dbReference type="OrthoDB" id="417252at2759"/>
<dbReference type="PhylomeDB" id="P60229"/>
<dbReference type="TreeFam" id="TF101518"/>
<dbReference type="Reactome" id="R-MMU-156827">
    <property type="pathway name" value="L13a-mediated translational silencing of Ceruloplasmin expression"/>
</dbReference>
<dbReference type="Reactome" id="R-MMU-72649">
    <property type="pathway name" value="Translation initiation complex formation"/>
</dbReference>
<dbReference type="Reactome" id="R-MMU-72689">
    <property type="pathway name" value="Formation of a pool of free 40S subunits"/>
</dbReference>
<dbReference type="Reactome" id="R-MMU-72695">
    <property type="pathway name" value="Formation of the ternary complex, and subsequently, the 43S complex"/>
</dbReference>
<dbReference type="Reactome" id="R-MMU-72702">
    <property type="pathway name" value="Ribosomal scanning and start codon recognition"/>
</dbReference>
<dbReference type="Reactome" id="R-MMU-72706">
    <property type="pathway name" value="GTP hydrolysis and joining of the 60S ribosomal subunit"/>
</dbReference>
<dbReference type="BioGRID-ORCS" id="16341">
    <property type="hits" value="24 hits in 80 CRISPR screens"/>
</dbReference>
<dbReference type="ChiTaRS" id="Eif3e">
    <property type="organism name" value="mouse"/>
</dbReference>
<dbReference type="PRO" id="PR:P60229"/>
<dbReference type="Proteomes" id="UP000000589">
    <property type="component" value="Chromosome 15"/>
</dbReference>
<dbReference type="RNAct" id="P60229">
    <property type="molecule type" value="protein"/>
</dbReference>
<dbReference type="Bgee" id="ENSMUSG00000022336">
    <property type="expression patterns" value="Expressed in epithelium of cochlear duct and 243 other cell types or tissues"/>
</dbReference>
<dbReference type="ExpressionAtlas" id="P60229">
    <property type="expression patterns" value="baseline and differential"/>
</dbReference>
<dbReference type="GO" id="GO:0005829">
    <property type="term" value="C:cytosol"/>
    <property type="evidence" value="ECO:0007669"/>
    <property type="project" value="Ensembl"/>
</dbReference>
<dbReference type="GO" id="GO:0016282">
    <property type="term" value="C:eukaryotic 43S preinitiation complex"/>
    <property type="evidence" value="ECO:0007669"/>
    <property type="project" value="UniProtKB-UniRule"/>
</dbReference>
<dbReference type="GO" id="GO:0033290">
    <property type="term" value="C:eukaryotic 48S preinitiation complex"/>
    <property type="evidence" value="ECO:0007669"/>
    <property type="project" value="UniProtKB-UniRule"/>
</dbReference>
<dbReference type="GO" id="GO:0005852">
    <property type="term" value="C:eukaryotic translation initiation factor 3 complex"/>
    <property type="evidence" value="ECO:0000314"/>
    <property type="project" value="UniProtKB"/>
</dbReference>
<dbReference type="GO" id="GO:0071540">
    <property type="term" value="C:eukaryotic translation initiation factor 3 complex, eIF3e"/>
    <property type="evidence" value="ECO:0007669"/>
    <property type="project" value="UniProtKB-UniRule"/>
</dbReference>
<dbReference type="GO" id="GO:0016605">
    <property type="term" value="C:PML body"/>
    <property type="evidence" value="ECO:0007669"/>
    <property type="project" value="UniProtKB-SubCell"/>
</dbReference>
<dbReference type="GO" id="GO:0014069">
    <property type="term" value="C:postsynaptic density"/>
    <property type="evidence" value="ECO:0000314"/>
    <property type="project" value="SynGO"/>
</dbReference>
<dbReference type="GO" id="GO:0003743">
    <property type="term" value="F:translation initiation factor activity"/>
    <property type="evidence" value="ECO:0007669"/>
    <property type="project" value="UniProtKB-UniRule"/>
</dbReference>
<dbReference type="GO" id="GO:0001732">
    <property type="term" value="P:formation of cytoplasmic translation initiation complex"/>
    <property type="evidence" value="ECO:0007669"/>
    <property type="project" value="UniProtKB-UniRule"/>
</dbReference>
<dbReference type="GO" id="GO:0000184">
    <property type="term" value="P:nuclear-transcribed mRNA catabolic process, nonsense-mediated decay"/>
    <property type="evidence" value="ECO:0000250"/>
    <property type="project" value="UniProtKB"/>
</dbReference>
<dbReference type="GO" id="GO:0045727">
    <property type="term" value="P:positive regulation of translation"/>
    <property type="evidence" value="ECO:0007669"/>
    <property type="project" value="Ensembl"/>
</dbReference>
<dbReference type="GO" id="GO:0006413">
    <property type="term" value="P:translational initiation"/>
    <property type="evidence" value="ECO:0000314"/>
    <property type="project" value="UniProtKB"/>
</dbReference>
<dbReference type="CDD" id="cd21378">
    <property type="entry name" value="eIF3E"/>
    <property type="match status" value="1"/>
</dbReference>
<dbReference type="HAMAP" id="MF_03004">
    <property type="entry name" value="eIF3e"/>
    <property type="match status" value="1"/>
</dbReference>
<dbReference type="InterPro" id="IPR016650">
    <property type="entry name" value="eIF3e"/>
</dbReference>
<dbReference type="InterPro" id="IPR019010">
    <property type="entry name" value="eIF3e_N"/>
</dbReference>
<dbReference type="InterPro" id="IPR000717">
    <property type="entry name" value="PCI_dom"/>
</dbReference>
<dbReference type="InterPro" id="IPR036390">
    <property type="entry name" value="WH_DNA-bd_sf"/>
</dbReference>
<dbReference type="PANTHER" id="PTHR10317">
    <property type="entry name" value="EUKARYOTIC TRANSLATION INITIATION FACTOR 3 SUBUNIT E"/>
    <property type="match status" value="1"/>
</dbReference>
<dbReference type="Pfam" id="PF09440">
    <property type="entry name" value="eIF3_N"/>
    <property type="match status" value="1"/>
</dbReference>
<dbReference type="Pfam" id="PF21357">
    <property type="entry name" value="EIF3E_C"/>
    <property type="match status" value="1"/>
</dbReference>
<dbReference type="Pfam" id="PF01399">
    <property type="entry name" value="PCI"/>
    <property type="match status" value="1"/>
</dbReference>
<dbReference type="PIRSF" id="PIRSF016255">
    <property type="entry name" value="eIF3e_su6"/>
    <property type="match status" value="1"/>
</dbReference>
<dbReference type="SMART" id="SM01186">
    <property type="entry name" value="eIF3_N"/>
    <property type="match status" value="1"/>
</dbReference>
<dbReference type="SMART" id="SM00088">
    <property type="entry name" value="PINT"/>
    <property type="match status" value="1"/>
</dbReference>
<dbReference type="SUPFAM" id="SSF46785">
    <property type="entry name" value="Winged helix' DNA-binding domain"/>
    <property type="match status" value="1"/>
</dbReference>
<dbReference type="PROSITE" id="PS50250">
    <property type="entry name" value="PCI"/>
    <property type="match status" value="1"/>
</dbReference>
<gene>
    <name type="primary">Eif3e</name>
    <name type="synonym">Eif3s6</name>
    <name type="synonym">Int6</name>
</gene>
<name>EIF3E_MOUSE</name>